<name>ZURA_LISMO</name>
<proteinExistence type="inferred from homology"/>
<gene>
    <name type="primary">zurA</name>
    <name type="ordered locus">lmo1447</name>
</gene>
<sequence>MKKIIEVNNVSYHYDKEHALENIHFQVAKGSFTGLIGPNGSGKSTMLKLILGVLKKQQGSISLFGEKQADFKDWVKIGFVSQKSNAFNSAFPATVKEVVASGLTKKKGLFKTLNNKDKEDIDYALKRVEMTDYLHRNIGELSGGQQQRVFIARALVSRPELLILDEPTVGVDVENVKAFYELLAELNRTEEMTLLLVTHDLMAVNTYVNHVISINKRIIFDGSAHEYQHYLADRELEILAEQRRREDACLDCDASPV</sequence>
<dbReference type="EMBL" id="AF104349">
    <property type="protein sequence ID" value="AAD37835.1"/>
    <property type="molecule type" value="Genomic_DNA"/>
</dbReference>
<dbReference type="EMBL" id="AL591979">
    <property type="protein sequence ID" value="CAC99525.1"/>
    <property type="molecule type" value="Genomic_DNA"/>
</dbReference>
<dbReference type="PIR" id="AG1255">
    <property type="entry name" value="AG1255"/>
</dbReference>
<dbReference type="PIR" id="T46652">
    <property type="entry name" value="T46652"/>
</dbReference>
<dbReference type="RefSeq" id="NP_464972.1">
    <property type="nucleotide sequence ID" value="NC_003210.1"/>
</dbReference>
<dbReference type="RefSeq" id="WP_010990125.1">
    <property type="nucleotide sequence ID" value="NZ_CP149495.1"/>
</dbReference>
<dbReference type="SMR" id="Q9XDA6"/>
<dbReference type="STRING" id="169963.gene:17594104"/>
<dbReference type="PaxDb" id="169963-lmo1447"/>
<dbReference type="EnsemblBacteria" id="CAC99525">
    <property type="protein sequence ID" value="CAC99525"/>
    <property type="gene ID" value="CAC99525"/>
</dbReference>
<dbReference type="GeneID" id="986711"/>
<dbReference type="KEGG" id="lmo:lmo1447"/>
<dbReference type="PATRIC" id="fig|169963.11.peg.1486"/>
<dbReference type="eggNOG" id="COG1121">
    <property type="taxonomic scope" value="Bacteria"/>
</dbReference>
<dbReference type="HOGENOM" id="CLU_000604_1_11_9"/>
<dbReference type="OrthoDB" id="9806726at2"/>
<dbReference type="PhylomeDB" id="Q9XDA6"/>
<dbReference type="BioCyc" id="LMON169963:LMO1447-MONOMER"/>
<dbReference type="Proteomes" id="UP000000817">
    <property type="component" value="Chromosome"/>
</dbReference>
<dbReference type="GO" id="GO:0043190">
    <property type="term" value="C:ATP-binding cassette (ABC) transporter complex"/>
    <property type="evidence" value="ECO:0000318"/>
    <property type="project" value="GO_Central"/>
</dbReference>
<dbReference type="GO" id="GO:0005524">
    <property type="term" value="F:ATP binding"/>
    <property type="evidence" value="ECO:0007669"/>
    <property type="project" value="UniProtKB-KW"/>
</dbReference>
<dbReference type="GO" id="GO:0016887">
    <property type="term" value="F:ATP hydrolysis activity"/>
    <property type="evidence" value="ECO:0007669"/>
    <property type="project" value="InterPro"/>
</dbReference>
<dbReference type="GO" id="GO:0042626">
    <property type="term" value="F:ATPase-coupled transmembrane transporter activity"/>
    <property type="evidence" value="ECO:0000318"/>
    <property type="project" value="GO_Central"/>
</dbReference>
<dbReference type="CDD" id="cd03235">
    <property type="entry name" value="ABC_Metallic_Cations"/>
    <property type="match status" value="1"/>
</dbReference>
<dbReference type="FunFam" id="3.40.50.300:FF:000134">
    <property type="entry name" value="Iron-enterobactin ABC transporter ATP-binding protein"/>
    <property type="match status" value="1"/>
</dbReference>
<dbReference type="Gene3D" id="3.40.50.300">
    <property type="entry name" value="P-loop containing nucleotide triphosphate hydrolases"/>
    <property type="match status" value="1"/>
</dbReference>
<dbReference type="InterPro" id="IPR003593">
    <property type="entry name" value="AAA+_ATPase"/>
</dbReference>
<dbReference type="InterPro" id="IPR003439">
    <property type="entry name" value="ABC_transporter-like_ATP-bd"/>
</dbReference>
<dbReference type="InterPro" id="IPR017871">
    <property type="entry name" value="ABC_transporter-like_CS"/>
</dbReference>
<dbReference type="InterPro" id="IPR050153">
    <property type="entry name" value="Metal_Ion_Import_ABC"/>
</dbReference>
<dbReference type="InterPro" id="IPR027417">
    <property type="entry name" value="P-loop_NTPase"/>
</dbReference>
<dbReference type="PANTHER" id="PTHR42734">
    <property type="entry name" value="METAL TRANSPORT SYSTEM ATP-BINDING PROTEIN TM_0124-RELATED"/>
    <property type="match status" value="1"/>
</dbReference>
<dbReference type="PANTHER" id="PTHR42734:SF17">
    <property type="entry name" value="METAL TRANSPORT SYSTEM ATP-BINDING PROTEIN TM_0124-RELATED"/>
    <property type="match status" value="1"/>
</dbReference>
<dbReference type="Pfam" id="PF00005">
    <property type="entry name" value="ABC_tran"/>
    <property type="match status" value="1"/>
</dbReference>
<dbReference type="SMART" id="SM00382">
    <property type="entry name" value="AAA"/>
    <property type="match status" value="1"/>
</dbReference>
<dbReference type="SUPFAM" id="SSF52540">
    <property type="entry name" value="P-loop containing nucleoside triphosphate hydrolases"/>
    <property type="match status" value="1"/>
</dbReference>
<dbReference type="PROSITE" id="PS00211">
    <property type="entry name" value="ABC_TRANSPORTER_1"/>
    <property type="match status" value="1"/>
</dbReference>
<dbReference type="PROSITE" id="PS50893">
    <property type="entry name" value="ABC_TRANSPORTER_2"/>
    <property type="match status" value="1"/>
</dbReference>
<organism>
    <name type="scientific">Listeria monocytogenes serovar 1/2a (strain ATCC BAA-679 / EGD-e)</name>
    <dbReference type="NCBI Taxonomy" id="169963"/>
    <lineage>
        <taxon>Bacteria</taxon>
        <taxon>Bacillati</taxon>
        <taxon>Bacillota</taxon>
        <taxon>Bacilli</taxon>
        <taxon>Bacillales</taxon>
        <taxon>Listeriaceae</taxon>
        <taxon>Listeria</taxon>
    </lineage>
</organism>
<reference key="1">
    <citation type="journal article" date="1999" name="FEMS Microbiol. Lett.">
        <title>Characterisation of a new operon encoding a Zur-like protein and an associated ABC zinc permease in Listeria monocytogenes.</title>
        <authorList>
            <person name="Dalet K."/>
            <person name="Gouin E."/>
            <person name="Cenatiempo Y."/>
            <person name="Cossart P."/>
            <person name="Hechard Y."/>
        </authorList>
    </citation>
    <scope>NUCLEOTIDE SEQUENCE [GENOMIC DNA]</scope>
    <source>
        <strain>LO28 / Serovar 1/2c</strain>
    </source>
</reference>
<reference key="2">
    <citation type="journal article" date="2001" name="Science">
        <title>Comparative genomics of Listeria species.</title>
        <authorList>
            <person name="Glaser P."/>
            <person name="Frangeul L."/>
            <person name="Buchrieser C."/>
            <person name="Rusniok C."/>
            <person name="Amend A."/>
            <person name="Baquero F."/>
            <person name="Berche P."/>
            <person name="Bloecker H."/>
            <person name="Brandt P."/>
            <person name="Chakraborty T."/>
            <person name="Charbit A."/>
            <person name="Chetouani F."/>
            <person name="Couve E."/>
            <person name="de Daruvar A."/>
            <person name="Dehoux P."/>
            <person name="Domann E."/>
            <person name="Dominguez-Bernal G."/>
            <person name="Duchaud E."/>
            <person name="Durant L."/>
            <person name="Dussurget O."/>
            <person name="Entian K.-D."/>
            <person name="Fsihi H."/>
            <person name="Garcia-del Portillo F."/>
            <person name="Garrido P."/>
            <person name="Gautier L."/>
            <person name="Goebel W."/>
            <person name="Gomez-Lopez N."/>
            <person name="Hain T."/>
            <person name="Hauf J."/>
            <person name="Jackson D."/>
            <person name="Jones L.-M."/>
            <person name="Kaerst U."/>
            <person name="Kreft J."/>
            <person name="Kuhn M."/>
            <person name="Kunst F."/>
            <person name="Kurapkat G."/>
            <person name="Madueno E."/>
            <person name="Maitournam A."/>
            <person name="Mata Vicente J."/>
            <person name="Ng E."/>
            <person name="Nedjari H."/>
            <person name="Nordsiek G."/>
            <person name="Novella S."/>
            <person name="de Pablos B."/>
            <person name="Perez-Diaz J.-C."/>
            <person name="Purcell R."/>
            <person name="Remmel B."/>
            <person name="Rose M."/>
            <person name="Schlueter T."/>
            <person name="Simoes N."/>
            <person name="Tierrez A."/>
            <person name="Vazquez-Boland J.-A."/>
            <person name="Voss H."/>
            <person name="Wehland J."/>
            <person name="Cossart P."/>
        </authorList>
    </citation>
    <scope>NUCLEOTIDE SEQUENCE [LARGE SCALE GENOMIC DNA]</scope>
    <source>
        <strain>ATCC BAA-679 / EGD-e</strain>
    </source>
</reference>
<protein>
    <recommendedName>
        <fullName>Zinc uptake system ATP-binding protein ZurA</fullName>
    </recommendedName>
</protein>
<accession>Q9XDA6</accession>
<evidence type="ECO:0000255" key="1">
    <source>
        <dbReference type="PROSITE-ProRule" id="PRU00434"/>
    </source>
</evidence>
<evidence type="ECO:0000305" key="2"/>
<keyword id="KW-0067">ATP-binding</keyword>
<keyword id="KW-0547">Nucleotide-binding</keyword>
<keyword id="KW-1185">Reference proteome</keyword>
<keyword id="KW-0813">Transport</keyword>
<keyword id="KW-0862">Zinc</keyword>
<comment type="function">
    <text evidence="2">Involved in a zinc uptake transport system.</text>
</comment>
<comment type="similarity">
    <text evidence="2">Belongs to the ABC transporter superfamily.</text>
</comment>
<feature type="chain" id="PRO_0000093135" description="Zinc uptake system ATP-binding protein ZurA">
    <location>
        <begin position="1"/>
        <end position="257"/>
    </location>
</feature>
<feature type="domain" description="ABC transporter" evidence="1">
    <location>
        <begin position="5"/>
        <end position="241"/>
    </location>
</feature>
<feature type="binding site" evidence="1">
    <location>
        <begin position="37"/>
        <end position="44"/>
    </location>
    <ligand>
        <name>ATP</name>
        <dbReference type="ChEBI" id="CHEBI:30616"/>
    </ligand>
</feature>